<proteinExistence type="evidence at transcript level"/>
<sequence>MDLMNGQASNVNIAATASEKSSSSESLSDKGSELKKSFDAVVFDVLKVTPEEYAGQITLMDVPVFKAIQPDELSSCGWNKKEKYSSAPNAVAFTRRFNHVSFWVVREILHAQTLKIRAEVLSHYIKTAKKLYELNNLHALMAVVSGLQSAPIFRLTKTWALLSRKDKTTFEKLEYVMSKEDNYKRLRDYISSLKMTPCIPYLGIYLSDLTYIDSAYPSTGSILENEQRSNLMNNILRIISDLQQSCEYDIPMLPHVQKYLNSVQYIEELQKFVEDDNYKLSLKIEPGTSTPRSAASREDLVGPEVGASPQSGRKSVAAEGALLPQTPPSPRNLIPHGHRKCHSLGYNFIHKMNTAEFKSATFPNAGPRHLLDDSVMEPHAPSRGQAESSTLSSGISIGSSDGSELSEETSWPAFESSAESEDLAVHLYPGAVTIQGVLRRKTLLKEGKKPTVASWTKYWAALCGTQLFYYAAKSLKATERKHFKSTSNKNVSVVGWMVMMADDPEHPDLFLLTDSEKGNSYKFQAGNRMNAMLWFKHLSAACQSNKQQVPTNLMTFE</sequence>
<reference key="1">
    <citation type="submission" date="2005-06" db="EMBL/GenBank/DDBJ databases">
        <title>DNA sequences of macaque genes expressed in brain or testis and its evolutionary implications.</title>
        <authorList>
            <consortium name="International consortium for macaque cDNA sequencing and analysis"/>
        </authorList>
    </citation>
    <scope>NUCLEOTIDE SEQUENCE [LARGE SCALE MRNA]</scope>
    <source>
        <tissue>Testis</tissue>
    </source>
</reference>
<comment type="function">
    <text evidence="1">Guanine nucleotide exchange factor for the small GTPase RALA. May be involved in cytoskeletal organization. May also be involved in the stimulation of transcription in a Ras-independent fashion.</text>
</comment>
<comment type="subunit">
    <text evidence="1">Interacts with the SH3 domains of GRB2 and PLCG1. Interacts with RALA.</text>
</comment>
<comment type="subcellular location">
    <subcellularLocation>
        <location evidence="1">Cytoplasm</location>
    </subcellularLocation>
    <subcellularLocation>
        <location evidence="1">Cell membrane</location>
    </subcellularLocation>
    <text evidence="1">Associates with membranes through the PH domain.</text>
</comment>
<keyword id="KW-1003">Cell membrane</keyword>
<keyword id="KW-0963">Cytoplasm</keyword>
<keyword id="KW-0344">Guanine-nucleotide releasing factor</keyword>
<keyword id="KW-0472">Membrane</keyword>
<keyword id="KW-0597">Phosphoprotein</keyword>
<keyword id="KW-1185">Reference proteome</keyword>
<feature type="chain" id="PRO_0000333196" description="Ras-specific guanine nucleotide-releasing factor RalGPS2">
    <location>
        <begin position="1"/>
        <end position="557"/>
    </location>
</feature>
<feature type="domain" description="Ras-GEF" evidence="5">
    <location>
        <begin position="49"/>
        <end position="287"/>
    </location>
</feature>
<feature type="domain" description="PH" evidence="4">
    <location>
        <begin position="431"/>
        <end position="543"/>
    </location>
</feature>
<feature type="region of interest" description="Disordered" evidence="6">
    <location>
        <begin position="283"/>
        <end position="314"/>
    </location>
</feature>
<feature type="region of interest" description="Disordered" evidence="6">
    <location>
        <begin position="368"/>
        <end position="409"/>
    </location>
</feature>
<feature type="region of interest" description="Required for stimulation of nucleotide exchange by RALA" evidence="1">
    <location>
        <begin position="433"/>
        <end position="557"/>
    </location>
</feature>
<feature type="short sequence motif" description="PXXP">
    <location>
        <begin position="327"/>
        <end position="330"/>
    </location>
</feature>
<feature type="compositionally biased region" description="Low complexity" evidence="6">
    <location>
        <begin position="387"/>
        <end position="403"/>
    </location>
</feature>
<feature type="modified residue" description="Phosphoserine" evidence="3">
    <location>
        <position position="293"/>
    </location>
</feature>
<feature type="modified residue" description="Phosphoserine" evidence="3">
    <location>
        <position position="296"/>
    </location>
</feature>
<feature type="modified residue" description="Phosphoserine" evidence="2">
    <location>
        <position position="308"/>
    </location>
</feature>
<feature type="modified residue" description="Phosphoserine" evidence="2">
    <location>
        <position position="311"/>
    </location>
</feature>
<feature type="modified residue" description="Phosphothreonine" evidence="2">
    <location>
        <position position="326"/>
    </location>
</feature>
<feature type="modified residue" description="Phosphoserine" evidence="2">
    <location>
        <position position="329"/>
    </location>
</feature>
<feature type="modified residue" description="Phosphoserine" evidence="2">
    <location>
        <position position="343"/>
    </location>
</feature>
<feature type="modified residue" description="Phosphothreonine" evidence="2">
    <location>
        <position position="361"/>
    </location>
</feature>
<feature type="modified residue" description="Phosphoserine" evidence="2">
    <location>
        <position position="374"/>
    </location>
</feature>
<accession>Q4R7W3</accession>
<protein>
    <recommendedName>
        <fullName>Ras-specific guanine nucleotide-releasing factor RalGPS2</fullName>
    </recommendedName>
    <alternativeName>
        <fullName>Ral GEF with PH domain and SH3-binding motif 2</fullName>
    </alternativeName>
    <alternativeName>
        <fullName>RalA exchange factor RalGPS2</fullName>
    </alternativeName>
</protein>
<organism>
    <name type="scientific">Macaca fascicularis</name>
    <name type="common">Crab-eating macaque</name>
    <name type="synonym">Cynomolgus monkey</name>
    <dbReference type="NCBI Taxonomy" id="9541"/>
    <lineage>
        <taxon>Eukaryota</taxon>
        <taxon>Metazoa</taxon>
        <taxon>Chordata</taxon>
        <taxon>Craniata</taxon>
        <taxon>Vertebrata</taxon>
        <taxon>Euteleostomi</taxon>
        <taxon>Mammalia</taxon>
        <taxon>Eutheria</taxon>
        <taxon>Euarchontoglires</taxon>
        <taxon>Primates</taxon>
        <taxon>Haplorrhini</taxon>
        <taxon>Catarrhini</taxon>
        <taxon>Cercopithecidae</taxon>
        <taxon>Cercopithecinae</taxon>
        <taxon>Macaca</taxon>
    </lineage>
</organism>
<name>RGPS2_MACFA</name>
<dbReference type="EMBL" id="AB168698">
    <property type="protein sequence ID" value="BAE00809.1"/>
    <property type="molecule type" value="mRNA"/>
</dbReference>
<dbReference type="RefSeq" id="NP_001272067.1">
    <property type="nucleotide sequence ID" value="NM_001285138.1"/>
</dbReference>
<dbReference type="RefSeq" id="XP_045249189.1">
    <property type="nucleotide sequence ID" value="XM_045393254.2"/>
</dbReference>
<dbReference type="SMR" id="Q4R7W3"/>
<dbReference type="STRING" id="9541.ENSMFAP00000003704"/>
<dbReference type="Ensembl" id="ENSMFAT00000022357.2">
    <property type="protein sequence ID" value="ENSMFAP00000003696.1"/>
    <property type="gene ID" value="ENSMFAG00000001541.2"/>
</dbReference>
<dbReference type="GeneID" id="101865438"/>
<dbReference type="VEuPathDB" id="HostDB:ENSMFAG00000001541"/>
<dbReference type="eggNOG" id="KOG3417">
    <property type="taxonomic scope" value="Eukaryota"/>
</dbReference>
<dbReference type="GeneTree" id="ENSGT00940000154079"/>
<dbReference type="OMA" id="XSAESED"/>
<dbReference type="Proteomes" id="UP000233100">
    <property type="component" value="Chromosome 1"/>
</dbReference>
<dbReference type="Bgee" id="ENSMFAG00000001541">
    <property type="expression patterns" value="Expressed in lymph node and 13 other cell types or tissues"/>
</dbReference>
<dbReference type="GO" id="GO:0005737">
    <property type="term" value="C:cytoplasm"/>
    <property type="evidence" value="ECO:0007669"/>
    <property type="project" value="UniProtKB-SubCell"/>
</dbReference>
<dbReference type="GO" id="GO:0005886">
    <property type="term" value="C:plasma membrane"/>
    <property type="evidence" value="ECO:0007669"/>
    <property type="project" value="UniProtKB-SubCell"/>
</dbReference>
<dbReference type="GO" id="GO:0005085">
    <property type="term" value="F:guanyl-nucleotide exchange factor activity"/>
    <property type="evidence" value="ECO:0007669"/>
    <property type="project" value="UniProtKB-KW"/>
</dbReference>
<dbReference type="GO" id="GO:0007265">
    <property type="term" value="P:Ras protein signal transduction"/>
    <property type="evidence" value="ECO:0007669"/>
    <property type="project" value="TreeGrafter"/>
</dbReference>
<dbReference type="CDD" id="cd13310">
    <property type="entry name" value="PH_RalGPS1_2"/>
    <property type="match status" value="1"/>
</dbReference>
<dbReference type="CDD" id="cd00155">
    <property type="entry name" value="RasGEF"/>
    <property type="match status" value="1"/>
</dbReference>
<dbReference type="FunFam" id="1.10.840.10:FF:000010">
    <property type="entry name" value="ras-specific guanine nucleotide-releasing factor RalGPS1 isoform X1"/>
    <property type="match status" value="1"/>
</dbReference>
<dbReference type="Gene3D" id="2.30.29.30">
    <property type="entry name" value="Pleckstrin-homology domain (PH domain)/Phosphotyrosine-binding domain (PTB)"/>
    <property type="match status" value="1"/>
</dbReference>
<dbReference type="Gene3D" id="1.10.840.10">
    <property type="entry name" value="Ras guanine-nucleotide exchange factors catalytic domain"/>
    <property type="match status" value="1"/>
</dbReference>
<dbReference type="InterPro" id="IPR011993">
    <property type="entry name" value="PH-like_dom_sf"/>
</dbReference>
<dbReference type="InterPro" id="IPR001849">
    <property type="entry name" value="PH_domain"/>
</dbReference>
<dbReference type="InterPro" id="IPR008937">
    <property type="entry name" value="Ras-like_GEF"/>
</dbReference>
<dbReference type="InterPro" id="IPR023578">
    <property type="entry name" value="Ras_GEF_dom_sf"/>
</dbReference>
<dbReference type="InterPro" id="IPR001895">
    <property type="entry name" value="RASGEF_cat_dom"/>
</dbReference>
<dbReference type="InterPro" id="IPR036964">
    <property type="entry name" value="RASGEF_cat_dom_sf"/>
</dbReference>
<dbReference type="PANTHER" id="PTHR23113">
    <property type="entry name" value="GUANINE NUCLEOTIDE EXCHANGE FACTOR"/>
    <property type="match status" value="1"/>
</dbReference>
<dbReference type="PANTHER" id="PTHR23113:SF357">
    <property type="entry name" value="RAS-SPECIFIC GUANINE NUCLEOTIDE-RELEASING FACTOR RALGPS2"/>
    <property type="match status" value="1"/>
</dbReference>
<dbReference type="Pfam" id="PF00169">
    <property type="entry name" value="PH"/>
    <property type="match status" value="1"/>
</dbReference>
<dbReference type="Pfam" id="PF00617">
    <property type="entry name" value="RasGEF"/>
    <property type="match status" value="1"/>
</dbReference>
<dbReference type="SMART" id="SM00233">
    <property type="entry name" value="PH"/>
    <property type="match status" value="1"/>
</dbReference>
<dbReference type="SMART" id="SM00147">
    <property type="entry name" value="RasGEF"/>
    <property type="match status" value="1"/>
</dbReference>
<dbReference type="SUPFAM" id="SSF50729">
    <property type="entry name" value="PH domain-like"/>
    <property type="match status" value="1"/>
</dbReference>
<dbReference type="SUPFAM" id="SSF48366">
    <property type="entry name" value="Ras GEF"/>
    <property type="match status" value="1"/>
</dbReference>
<dbReference type="PROSITE" id="PS50003">
    <property type="entry name" value="PH_DOMAIN"/>
    <property type="match status" value="1"/>
</dbReference>
<dbReference type="PROSITE" id="PS50009">
    <property type="entry name" value="RASGEF_CAT"/>
    <property type="match status" value="1"/>
</dbReference>
<evidence type="ECO:0000250" key="1"/>
<evidence type="ECO:0000250" key="2">
    <source>
        <dbReference type="UniProtKB" id="Q86X27"/>
    </source>
</evidence>
<evidence type="ECO:0000250" key="3">
    <source>
        <dbReference type="UniProtKB" id="Q9ERD6"/>
    </source>
</evidence>
<evidence type="ECO:0000255" key="4">
    <source>
        <dbReference type="PROSITE-ProRule" id="PRU00145"/>
    </source>
</evidence>
<evidence type="ECO:0000255" key="5">
    <source>
        <dbReference type="PROSITE-ProRule" id="PRU00168"/>
    </source>
</evidence>
<evidence type="ECO:0000256" key="6">
    <source>
        <dbReference type="SAM" id="MobiDB-lite"/>
    </source>
</evidence>
<gene>
    <name type="primary">RALGPS2</name>
    <name type="ORF">QtsA-14234</name>
</gene>